<organism>
    <name type="scientific">Methanoregula boonei (strain DSM 21154 / JCM 14090 / 6A8)</name>
    <dbReference type="NCBI Taxonomy" id="456442"/>
    <lineage>
        <taxon>Archaea</taxon>
        <taxon>Methanobacteriati</taxon>
        <taxon>Methanobacteriota</taxon>
        <taxon>Stenosarchaea group</taxon>
        <taxon>Methanomicrobia</taxon>
        <taxon>Methanomicrobiales</taxon>
        <taxon>Methanoregulaceae</taxon>
        <taxon>Methanoregula</taxon>
    </lineage>
</organism>
<gene>
    <name evidence="1" type="primary">trm1</name>
    <name type="ordered locus">Mboo_1845</name>
</gene>
<dbReference type="EC" id="2.1.1.216" evidence="1"/>
<dbReference type="EMBL" id="CP000780">
    <property type="protein sequence ID" value="ABS56360.1"/>
    <property type="molecule type" value="Genomic_DNA"/>
</dbReference>
<dbReference type="RefSeq" id="WP_012107411.1">
    <property type="nucleotide sequence ID" value="NC_009712.1"/>
</dbReference>
<dbReference type="SMR" id="A7I9E9"/>
<dbReference type="STRING" id="456442.Mboo_1845"/>
<dbReference type="GeneID" id="5410649"/>
<dbReference type="KEGG" id="mbn:Mboo_1845"/>
<dbReference type="eggNOG" id="arCOG01219">
    <property type="taxonomic scope" value="Archaea"/>
</dbReference>
<dbReference type="HOGENOM" id="CLU_010862_5_1_2"/>
<dbReference type="OrthoDB" id="372177at2157"/>
<dbReference type="Proteomes" id="UP000002408">
    <property type="component" value="Chromosome"/>
</dbReference>
<dbReference type="GO" id="GO:0160104">
    <property type="term" value="F:tRNA (guanine(26)-N2)-dimethyltransferase activity"/>
    <property type="evidence" value="ECO:0007669"/>
    <property type="project" value="UniProtKB-UniRule"/>
</dbReference>
<dbReference type="GO" id="GO:0000049">
    <property type="term" value="F:tRNA binding"/>
    <property type="evidence" value="ECO:0007669"/>
    <property type="project" value="UniProtKB-KW"/>
</dbReference>
<dbReference type="GO" id="GO:0002940">
    <property type="term" value="P:tRNA N2-guanine methylation"/>
    <property type="evidence" value="ECO:0007669"/>
    <property type="project" value="TreeGrafter"/>
</dbReference>
<dbReference type="CDD" id="cd02440">
    <property type="entry name" value="AdoMet_MTases"/>
    <property type="match status" value="1"/>
</dbReference>
<dbReference type="Gene3D" id="3.30.56.70">
    <property type="entry name" value="N2,N2-dimethylguanosine tRNA methyltransferase, C-terminal domain"/>
    <property type="match status" value="1"/>
</dbReference>
<dbReference type="Gene3D" id="3.40.50.150">
    <property type="entry name" value="Vaccinia Virus protein VP39"/>
    <property type="match status" value="1"/>
</dbReference>
<dbReference type="HAMAP" id="MF_00290">
    <property type="entry name" value="tRNA_dimethyltr_TRM1"/>
    <property type="match status" value="1"/>
</dbReference>
<dbReference type="InterPro" id="IPR029063">
    <property type="entry name" value="SAM-dependent_MTases_sf"/>
</dbReference>
<dbReference type="InterPro" id="IPR002905">
    <property type="entry name" value="Trm1"/>
</dbReference>
<dbReference type="InterPro" id="IPR022923">
    <property type="entry name" value="TRM1_arc_bac"/>
</dbReference>
<dbReference type="InterPro" id="IPR042296">
    <property type="entry name" value="tRNA_met_Trm1_C"/>
</dbReference>
<dbReference type="NCBIfam" id="TIGR00308">
    <property type="entry name" value="TRM1"/>
    <property type="match status" value="1"/>
</dbReference>
<dbReference type="PANTHER" id="PTHR10631">
    <property type="entry name" value="N 2 ,N 2 -DIMETHYLGUANOSINE TRNA METHYLTRANSFERASE"/>
    <property type="match status" value="1"/>
</dbReference>
<dbReference type="PANTHER" id="PTHR10631:SF3">
    <property type="entry name" value="TRNA (GUANINE(26)-N(2))-DIMETHYLTRANSFERASE"/>
    <property type="match status" value="1"/>
</dbReference>
<dbReference type="Pfam" id="PF02005">
    <property type="entry name" value="TRM"/>
    <property type="match status" value="1"/>
</dbReference>
<dbReference type="SUPFAM" id="SSF53335">
    <property type="entry name" value="S-adenosyl-L-methionine-dependent methyltransferases"/>
    <property type="match status" value="1"/>
</dbReference>
<dbReference type="PROSITE" id="PS51626">
    <property type="entry name" value="SAM_MT_TRM1"/>
    <property type="match status" value="1"/>
</dbReference>
<name>TRM1_METB6</name>
<proteinExistence type="inferred from homology"/>
<reference key="1">
    <citation type="journal article" date="2015" name="Microbiology">
        <title>Genome of Methanoregula boonei 6A8 reveals adaptations to oligotrophic peatland environments.</title>
        <authorList>
            <person name="Braeuer S."/>
            <person name="Cadillo-Quiroz H."/>
            <person name="Kyrpides N."/>
            <person name="Woyke T."/>
            <person name="Goodwin L."/>
            <person name="Detter C."/>
            <person name="Podell S."/>
            <person name="Yavitt J.B."/>
            <person name="Zinder S.H."/>
        </authorList>
    </citation>
    <scope>NUCLEOTIDE SEQUENCE [LARGE SCALE GENOMIC DNA]</scope>
    <source>
        <strain>DSM 21154 / JCM 14090 / 6A8</strain>
    </source>
</reference>
<evidence type="ECO:0000255" key="1">
    <source>
        <dbReference type="HAMAP-Rule" id="MF_00290"/>
    </source>
</evidence>
<accession>A7I9E9</accession>
<comment type="function">
    <text evidence="1">Dimethylates a single guanine residue at position 26 of a number of tRNAs using S-adenosyl-L-methionine as donor of the methyl groups.</text>
</comment>
<comment type="catalytic activity">
    <reaction evidence="1">
        <text>guanosine(26) in tRNA + 2 S-adenosyl-L-methionine = N(2)-dimethylguanosine(26) in tRNA + 2 S-adenosyl-L-homocysteine + 2 H(+)</text>
        <dbReference type="Rhea" id="RHEA:43140"/>
        <dbReference type="Rhea" id="RHEA-COMP:10359"/>
        <dbReference type="Rhea" id="RHEA-COMP:10360"/>
        <dbReference type="ChEBI" id="CHEBI:15378"/>
        <dbReference type="ChEBI" id="CHEBI:57856"/>
        <dbReference type="ChEBI" id="CHEBI:59789"/>
        <dbReference type="ChEBI" id="CHEBI:74269"/>
        <dbReference type="ChEBI" id="CHEBI:74513"/>
        <dbReference type="EC" id="2.1.1.216"/>
    </reaction>
</comment>
<comment type="similarity">
    <text evidence="1">Belongs to the class I-like SAM-binding methyltransferase superfamily. Trm1 family.</text>
</comment>
<keyword id="KW-0479">Metal-binding</keyword>
<keyword id="KW-0489">Methyltransferase</keyword>
<keyword id="KW-1185">Reference proteome</keyword>
<keyword id="KW-0694">RNA-binding</keyword>
<keyword id="KW-0949">S-adenosyl-L-methionine</keyword>
<keyword id="KW-0808">Transferase</keyword>
<keyword id="KW-0819">tRNA processing</keyword>
<keyword id="KW-0820">tRNA-binding</keyword>
<keyword id="KW-0862">Zinc</keyword>
<sequence>MDVIEATEGTTTFLVPVQDSTGQFPPGTAPVFFNRRMELNRDATVLLLSVLQPSDYLDAMGATGVRGLRVAHEVGIPVTINDRDPEAIPLIRENVARLGLPVTVTCRDACSLLFEQAFDAVDIDPFGTPAPFTDAGIRGTRRFLLLTATDTAPLCGAHLKAGIRRYFARPGNTGYHGEVGLRILLGFVARETVKYDRGIEPLFCFAREHFVRLNLRLTRGPKAADRTIERLGFILQCPTCAYREELPGMFPPAATCPFCGKPLRPIGPLFLGAISSDEILGQMQARLPSCGLGTQKELEKLLTTCREELPTSSHYDYHRVAQQLVVSPPKIETLLEALRSAGFDASRTHYSGTGVKTNAPLPVLYDAIRGKNEP</sequence>
<protein>
    <recommendedName>
        <fullName evidence="1">tRNA (guanine(26)-N(2))-dimethyltransferase</fullName>
        <ecNumber evidence="1">2.1.1.216</ecNumber>
    </recommendedName>
    <alternativeName>
        <fullName evidence="1">tRNA 2,2-dimethylguanosine-26 methyltransferase</fullName>
    </alternativeName>
    <alternativeName>
        <fullName evidence="1">tRNA(guanine-26,N(2)-N(2)) methyltransferase</fullName>
    </alternativeName>
    <alternativeName>
        <fullName evidence="1">tRNA(m(2,2)G26)dimethyltransferase</fullName>
    </alternativeName>
</protein>
<feature type="chain" id="PRO_1000197036" description="tRNA (guanine(26)-N(2))-dimethyltransferase">
    <location>
        <begin position="1"/>
        <end position="374"/>
    </location>
</feature>
<feature type="domain" description="Trm1 methyltransferase" evidence="1">
    <location>
        <begin position="4"/>
        <end position="368"/>
    </location>
</feature>
<feature type="binding site" evidence="1">
    <location>
        <position position="41"/>
    </location>
    <ligand>
        <name>S-adenosyl-L-methionine</name>
        <dbReference type="ChEBI" id="CHEBI:59789"/>
    </ligand>
</feature>
<feature type="binding site" evidence="1">
    <location>
        <position position="66"/>
    </location>
    <ligand>
        <name>S-adenosyl-L-methionine</name>
        <dbReference type="ChEBI" id="CHEBI:59789"/>
    </ligand>
</feature>
<feature type="binding site" evidence="1">
    <location>
        <position position="82"/>
    </location>
    <ligand>
        <name>S-adenosyl-L-methionine</name>
        <dbReference type="ChEBI" id="CHEBI:59789"/>
    </ligand>
</feature>
<feature type="binding site" evidence="1">
    <location>
        <position position="108"/>
    </location>
    <ligand>
        <name>S-adenosyl-L-methionine</name>
        <dbReference type="ChEBI" id="CHEBI:59789"/>
    </ligand>
</feature>
<feature type="binding site" evidence="1">
    <location>
        <position position="109"/>
    </location>
    <ligand>
        <name>S-adenosyl-L-methionine</name>
        <dbReference type="ChEBI" id="CHEBI:59789"/>
    </ligand>
</feature>
<feature type="binding site" evidence="1">
    <location>
        <position position="237"/>
    </location>
    <ligand>
        <name>Zn(2+)</name>
        <dbReference type="ChEBI" id="CHEBI:29105"/>
    </ligand>
</feature>
<feature type="binding site" evidence="1">
    <location>
        <position position="240"/>
    </location>
    <ligand>
        <name>Zn(2+)</name>
        <dbReference type="ChEBI" id="CHEBI:29105"/>
    </ligand>
</feature>
<feature type="binding site" evidence="1">
    <location>
        <position position="256"/>
    </location>
    <ligand>
        <name>Zn(2+)</name>
        <dbReference type="ChEBI" id="CHEBI:29105"/>
    </ligand>
</feature>
<feature type="binding site" evidence="1">
    <location>
        <position position="259"/>
    </location>
    <ligand>
        <name>Zn(2+)</name>
        <dbReference type="ChEBI" id="CHEBI:29105"/>
    </ligand>
</feature>